<evidence type="ECO:0000255" key="1">
    <source>
        <dbReference type="HAMAP-Rule" id="MF_01547"/>
    </source>
</evidence>
<comment type="function">
    <text evidence="1">Specifically methylates the uridine in position 2552 of 23S rRNA at the 2'-O position of the ribose in the fully assembled 50S ribosomal subunit.</text>
</comment>
<comment type="catalytic activity">
    <reaction evidence="1">
        <text>uridine(2552) in 23S rRNA + S-adenosyl-L-methionine = 2'-O-methyluridine(2552) in 23S rRNA + S-adenosyl-L-homocysteine + H(+)</text>
        <dbReference type="Rhea" id="RHEA:42720"/>
        <dbReference type="Rhea" id="RHEA-COMP:10202"/>
        <dbReference type="Rhea" id="RHEA-COMP:10203"/>
        <dbReference type="ChEBI" id="CHEBI:15378"/>
        <dbReference type="ChEBI" id="CHEBI:57856"/>
        <dbReference type="ChEBI" id="CHEBI:59789"/>
        <dbReference type="ChEBI" id="CHEBI:65315"/>
        <dbReference type="ChEBI" id="CHEBI:74478"/>
        <dbReference type="EC" id="2.1.1.166"/>
    </reaction>
</comment>
<comment type="subcellular location">
    <subcellularLocation>
        <location evidence="1">Cytoplasm</location>
    </subcellularLocation>
</comment>
<comment type="similarity">
    <text evidence="1">Belongs to the class I-like SAM-binding methyltransferase superfamily. RNA methyltransferase RlmE family.</text>
</comment>
<proteinExistence type="inferred from homology"/>
<organism>
    <name type="scientific">Vibrio atlanticus (strain LGP32)</name>
    <name type="common">Vibrio splendidus (strain Mel32)</name>
    <dbReference type="NCBI Taxonomy" id="575788"/>
    <lineage>
        <taxon>Bacteria</taxon>
        <taxon>Pseudomonadati</taxon>
        <taxon>Pseudomonadota</taxon>
        <taxon>Gammaproteobacteria</taxon>
        <taxon>Vibrionales</taxon>
        <taxon>Vibrionaceae</taxon>
        <taxon>Vibrio</taxon>
    </lineage>
</organism>
<protein>
    <recommendedName>
        <fullName evidence="1">Ribosomal RNA large subunit methyltransferase E</fullName>
        <ecNumber evidence="1">2.1.1.166</ecNumber>
    </recommendedName>
    <alternativeName>
        <fullName evidence="1">23S rRNA Um2552 methyltransferase</fullName>
    </alternativeName>
    <alternativeName>
        <fullName evidence="1">rRNA (uridine-2'-O-)-methyltransferase</fullName>
    </alternativeName>
</protein>
<accession>B7VJI4</accession>
<dbReference type="EC" id="2.1.1.166" evidence="1"/>
<dbReference type="EMBL" id="FM954972">
    <property type="protein sequence ID" value="CAV19648.1"/>
    <property type="molecule type" value="Genomic_DNA"/>
</dbReference>
<dbReference type="SMR" id="B7VJI4"/>
<dbReference type="STRING" id="575788.VS_2491"/>
<dbReference type="KEGG" id="vsp:VS_2491"/>
<dbReference type="eggNOG" id="COG0293">
    <property type="taxonomic scope" value="Bacteria"/>
</dbReference>
<dbReference type="HOGENOM" id="CLU_009422_4_0_6"/>
<dbReference type="Proteomes" id="UP000009100">
    <property type="component" value="Chromosome 1"/>
</dbReference>
<dbReference type="GO" id="GO:0005737">
    <property type="term" value="C:cytoplasm"/>
    <property type="evidence" value="ECO:0007669"/>
    <property type="project" value="UniProtKB-SubCell"/>
</dbReference>
<dbReference type="GO" id="GO:0008650">
    <property type="term" value="F:rRNA (uridine-2'-O-)-methyltransferase activity"/>
    <property type="evidence" value="ECO:0007669"/>
    <property type="project" value="UniProtKB-UniRule"/>
</dbReference>
<dbReference type="FunFam" id="3.40.50.150:FF:000005">
    <property type="entry name" value="Ribosomal RNA large subunit methyltransferase E"/>
    <property type="match status" value="1"/>
</dbReference>
<dbReference type="Gene3D" id="3.40.50.150">
    <property type="entry name" value="Vaccinia Virus protein VP39"/>
    <property type="match status" value="1"/>
</dbReference>
<dbReference type="HAMAP" id="MF_01547">
    <property type="entry name" value="RNA_methyltr_E"/>
    <property type="match status" value="1"/>
</dbReference>
<dbReference type="InterPro" id="IPR050082">
    <property type="entry name" value="RNA_methyltr_RlmE"/>
</dbReference>
<dbReference type="InterPro" id="IPR002877">
    <property type="entry name" value="RNA_MeTrfase_FtsJ_dom"/>
</dbReference>
<dbReference type="InterPro" id="IPR015507">
    <property type="entry name" value="rRNA-MeTfrase_E"/>
</dbReference>
<dbReference type="InterPro" id="IPR029063">
    <property type="entry name" value="SAM-dependent_MTases_sf"/>
</dbReference>
<dbReference type="NCBIfam" id="NF008390">
    <property type="entry name" value="PRK11188.1"/>
    <property type="match status" value="1"/>
</dbReference>
<dbReference type="PANTHER" id="PTHR10920">
    <property type="entry name" value="RIBOSOMAL RNA METHYLTRANSFERASE"/>
    <property type="match status" value="1"/>
</dbReference>
<dbReference type="PANTHER" id="PTHR10920:SF18">
    <property type="entry name" value="RRNA METHYLTRANSFERASE 2, MITOCHONDRIAL"/>
    <property type="match status" value="1"/>
</dbReference>
<dbReference type="Pfam" id="PF01728">
    <property type="entry name" value="FtsJ"/>
    <property type="match status" value="1"/>
</dbReference>
<dbReference type="PIRSF" id="PIRSF005461">
    <property type="entry name" value="23S_rRNA_mtase"/>
    <property type="match status" value="1"/>
</dbReference>
<dbReference type="SUPFAM" id="SSF53335">
    <property type="entry name" value="S-adenosyl-L-methionine-dependent methyltransferases"/>
    <property type="match status" value="1"/>
</dbReference>
<feature type="chain" id="PRO_1000185305" description="Ribosomal RNA large subunit methyltransferase E">
    <location>
        <begin position="1"/>
        <end position="209"/>
    </location>
</feature>
<feature type="active site" description="Proton acceptor" evidence="1">
    <location>
        <position position="164"/>
    </location>
</feature>
<feature type="binding site" evidence="1">
    <location>
        <position position="63"/>
    </location>
    <ligand>
        <name>S-adenosyl-L-methionine</name>
        <dbReference type="ChEBI" id="CHEBI:59789"/>
    </ligand>
</feature>
<feature type="binding site" evidence="1">
    <location>
        <position position="65"/>
    </location>
    <ligand>
        <name>S-adenosyl-L-methionine</name>
        <dbReference type="ChEBI" id="CHEBI:59789"/>
    </ligand>
</feature>
<feature type="binding site" evidence="1">
    <location>
        <position position="83"/>
    </location>
    <ligand>
        <name>S-adenosyl-L-methionine</name>
        <dbReference type="ChEBI" id="CHEBI:59789"/>
    </ligand>
</feature>
<feature type="binding site" evidence="1">
    <location>
        <position position="99"/>
    </location>
    <ligand>
        <name>S-adenosyl-L-methionine</name>
        <dbReference type="ChEBI" id="CHEBI:59789"/>
    </ligand>
</feature>
<feature type="binding site" evidence="1">
    <location>
        <position position="124"/>
    </location>
    <ligand>
        <name>S-adenosyl-L-methionine</name>
        <dbReference type="ChEBI" id="CHEBI:59789"/>
    </ligand>
</feature>
<reference key="1">
    <citation type="submission" date="2009-02" db="EMBL/GenBank/DDBJ databases">
        <title>Vibrio splendidus str. LGP32 complete genome.</title>
        <authorList>
            <person name="Mazel D."/>
            <person name="Le Roux F."/>
        </authorList>
    </citation>
    <scope>NUCLEOTIDE SEQUENCE [LARGE SCALE GENOMIC DNA]</scope>
    <source>
        <strain>LGP32</strain>
    </source>
</reference>
<sequence>MSKQKHSASSGRWLKEHFDDKYANEARKKGYRSRAYFKMEEIQTKDKLLTPGMTIVDLGAAPGGWSQYAAKIIGDNGQIIACDLLPMDPIAGVSFLQGDFREEAVLDALLERIQPNMVDVVMSDMAPNIAGNNSVDQPRAMYLVELALDMCRQVLATNGSFVVKVFQGEGFDQYVKDVREMFKTVKVRKPDSSRARSREVFIVATGYKG</sequence>
<keyword id="KW-0963">Cytoplasm</keyword>
<keyword id="KW-0489">Methyltransferase</keyword>
<keyword id="KW-0698">rRNA processing</keyword>
<keyword id="KW-0949">S-adenosyl-L-methionine</keyword>
<keyword id="KW-0808">Transferase</keyword>
<name>RLME_VIBA3</name>
<gene>
    <name evidence="1" type="primary">rlmE</name>
    <name evidence="1" type="synonym">ftsJ</name>
    <name evidence="1" type="synonym">rrmJ</name>
    <name type="ordered locus">VS_2491</name>
</gene>